<proteinExistence type="inferred from homology"/>
<evidence type="ECO:0000250" key="1"/>
<evidence type="ECO:0000250" key="2">
    <source>
        <dbReference type="UniProtKB" id="P00157"/>
    </source>
</evidence>
<evidence type="ECO:0000255" key="3">
    <source>
        <dbReference type="PROSITE-ProRule" id="PRU00967"/>
    </source>
</evidence>
<evidence type="ECO:0000255" key="4">
    <source>
        <dbReference type="PROSITE-ProRule" id="PRU00968"/>
    </source>
</evidence>
<keyword id="KW-0249">Electron transport</keyword>
<keyword id="KW-0349">Heme</keyword>
<keyword id="KW-0408">Iron</keyword>
<keyword id="KW-0472">Membrane</keyword>
<keyword id="KW-0479">Metal-binding</keyword>
<keyword id="KW-0496">Mitochondrion</keyword>
<keyword id="KW-0999">Mitochondrion inner membrane</keyword>
<keyword id="KW-0679">Respiratory chain</keyword>
<keyword id="KW-0812">Transmembrane</keyword>
<keyword id="KW-1133">Transmembrane helix</keyword>
<keyword id="KW-0813">Transport</keyword>
<keyword id="KW-0830">Ubiquinone</keyword>
<accession>Q9G4Q1</accession>
<accession>Q9G4P7</accession>
<accession>Q9G4Q0</accession>
<reference key="1">
    <citation type="journal article" date="2001" name="Biol. Conserv.">
        <title>A phylogeographic perspective on endemism in the Alexander archipelago of the North Pacific.</title>
        <authorList>
            <person name="Cook J.A."/>
            <person name="Bidlack A.L."/>
            <person name="Conroy C.J."/>
            <person name="Demboski J.R."/>
            <person name="Fleming M.A."/>
            <person name="Runck A.M."/>
            <person name="Stone K.D."/>
            <person name="MacDonald S.O."/>
        </authorList>
    </citation>
    <scope>NUCLEOTIDE SEQUENCE [GENOMIC DNA]</scope>
    <source>
        <strain>Isolate AF 3130</strain>
        <strain>Isolate AF 6486</strain>
        <strain>Isolate AF 7052</strain>
    </source>
</reference>
<feature type="chain" id="PRO_0000060797" description="Cytochrome b">
    <location>
        <begin position="1"/>
        <end position="380"/>
    </location>
</feature>
<feature type="transmembrane region" description="Helical" evidence="2">
    <location>
        <begin position="33"/>
        <end position="53"/>
    </location>
</feature>
<feature type="transmembrane region" description="Helical" evidence="2">
    <location>
        <begin position="77"/>
        <end position="98"/>
    </location>
</feature>
<feature type="transmembrane region" description="Helical" evidence="2">
    <location>
        <begin position="113"/>
        <end position="133"/>
    </location>
</feature>
<feature type="transmembrane region" description="Helical" evidence="2">
    <location>
        <begin position="178"/>
        <end position="198"/>
    </location>
</feature>
<feature type="transmembrane region" description="Helical" evidence="2">
    <location>
        <begin position="226"/>
        <end position="246"/>
    </location>
</feature>
<feature type="transmembrane region" description="Helical" evidence="2">
    <location>
        <begin position="288"/>
        <end position="308"/>
    </location>
</feature>
<feature type="transmembrane region" description="Helical" evidence="2">
    <location>
        <begin position="320"/>
        <end position="340"/>
    </location>
</feature>
<feature type="transmembrane region" description="Helical" evidence="2">
    <location>
        <begin position="347"/>
        <end position="367"/>
    </location>
</feature>
<feature type="binding site" description="axial binding residue" evidence="2">
    <location>
        <position position="83"/>
    </location>
    <ligand>
        <name>heme b</name>
        <dbReference type="ChEBI" id="CHEBI:60344"/>
        <label>b562</label>
    </ligand>
    <ligandPart>
        <name>Fe</name>
        <dbReference type="ChEBI" id="CHEBI:18248"/>
    </ligandPart>
</feature>
<feature type="binding site" description="axial binding residue" evidence="2">
    <location>
        <position position="97"/>
    </location>
    <ligand>
        <name>heme b</name>
        <dbReference type="ChEBI" id="CHEBI:60344"/>
        <label>b566</label>
    </ligand>
    <ligandPart>
        <name>Fe</name>
        <dbReference type="ChEBI" id="CHEBI:18248"/>
    </ligandPart>
</feature>
<feature type="binding site" description="axial binding residue" evidence="2">
    <location>
        <position position="182"/>
    </location>
    <ligand>
        <name>heme b</name>
        <dbReference type="ChEBI" id="CHEBI:60344"/>
        <label>b562</label>
    </ligand>
    <ligandPart>
        <name>Fe</name>
        <dbReference type="ChEBI" id="CHEBI:18248"/>
    </ligandPart>
</feature>
<feature type="binding site" description="axial binding residue" evidence="2">
    <location>
        <position position="196"/>
    </location>
    <ligand>
        <name>heme b</name>
        <dbReference type="ChEBI" id="CHEBI:60344"/>
        <label>b566</label>
    </ligand>
    <ligandPart>
        <name>Fe</name>
        <dbReference type="ChEBI" id="CHEBI:18248"/>
    </ligandPart>
</feature>
<feature type="binding site" evidence="2">
    <location>
        <position position="201"/>
    </location>
    <ligand>
        <name>a ubiquinone</name>
        <dbReference type="ChEBI" id="CHEBI:16389"/>
    </ligand>
</feature>
<feature type="sequence variant" description="In strain: Isolate AF 7052.">
    <original>T</original>
    <variation>M</variation>
    <location>
        <position position="237"/>
    </location>
</feature>
<feature type="sequence variant" description="In strain: Isolate AF 3130.">
    <original>T</original>
    <variation>A</variation>
    <location>
        <position position="293"/>
    </location>
</feature>
<feature type="sequence variant" description="In strain: Isolate AF 3130.">
    <original>I</original>
    <variation>V</variation>
    <location>
        <position position="327"/>
    </location>
</feature>
<organism>
    <name type="scientific">Clethrionomys rutilus</name>
    <name type="common">Northern red-backed vole</name>
    <name type="synonym">Myodes rutilus</name>
    <dbReference type="NCBI Taxonomy" id="537920"/>
    <lineage>
        <taxon>Eukaryota</taxon>
        <taxon>Metazoa</taxon>
        <taxon>Chordata</taxon>
        <taxon>Craniata</taxon>
        <taxon>Vertebrata</taxon>
        <taxon>Euteleostomi</taxon>
        <taxon>Mammalia</taxon>
        <taxon>Eutheria</taxon>
        <taxon>Euarchontoglires</taxon>
        <taxon>Glires</taxon>
        <taxon>Rodentia</taxon>
        <taxon>Myomorpha</taxon>
        <taxon>Muroidea</taxon>
        <taxon>Cricetidae</taxon>
        <taxon>Arvicolinae</taxon>
        <taxon>Clethrionomys</taxon>
    </lineage>
</organism>
<geneLocation type="mitochondrion"/>
<dbReference type="EMBL" id="AF272631">
    <property type="protein sequence ID" value="AAG44803.1"/>
    <property type="molecule type" value="Genomic_DNA"/>
</dbReference>
<dbReference type="EMBL" id="AF272632">
    <property type="protein sequence ID" value="AAG44804.1"/>
    <property type="molecule type" value="Genomic_DNA"/>
</dbReference>
<dbReference type="EMBL" id="AF272638">
    <property type="protein sequence ID" value="AAG44810.1"/>
    <property type="molecule type" value="Genomic_DNA"/>
</dbReference>
<dbReference type="SMR" id="Q9G4Q1"/>
<dbReference type="GO" id="GO:0005743">
    <property type="term" value="C:mitochondrial inner membrane"/>
    <property type="evidence" value="ECO:0007669"/>
    <property type="project" value="UniProtKB-SubCell"/>
</dbReference>
<dbReference type="GO" id="GO:0045275">
    <property type="term" value="C:respiratory chain complex III"/>
    <property type="evidence" value="ECO:0007669"/>
    <property type="project" value="InterPro"/>
</dbReference>
<dbReference type="GO" id="GO:0046872">
    <property type="term" value="F:metal ion binding"/>
    <property type="evidence" value="ECO:0007669"/>
    <property type="project" value="UniProtKB-KW"/>
</dbReference>
<dbReference type="GO" id="GO:0008121">
    <property type="term" value="F:ubiquinol-cytochrome-c reductase activity"/>
    <property type="evidence" value="ECO:0007669"/>
    <property type="project" value="InterPro"/>
</dbReference>
<dbReference type="GO" id="GO:0006122">
    <property type="term" value="P:mitochondrial electron transport, ubiquinol to cytochrome c"/>
    <property type="evidence" value="ECO:0007669"/>
    <property type="project" value="TreeGrafter"/>
</dbReference>
<dbReference type="CDD" id="cd00290">
    <property type="entry name" value="cytochrome_b_C"/>
    <property type="match status" value="1"/>
</dbReference>
<dbReference type="CDD" id="cd00284">
    <property type="entry name" value="Cytochrome_b_N"/>
    <property type="match status" value="1"/>
</dbReference>
<dbReference type="FunFam" id="1.20.810.10:FF:000002">
    <property type="entry name" value="Cytochrome b"/>
    <property type="match status" value="1"/>
</dbReference>
<dbReference type="Gene3D" id="1.20.810.10">
    <property type="entry name" value="Cytochrome Bc1 Complex, Chain C"/>
    <property type="match status" value="1"/>
</dbReference>
<dbReference type="InterPro" id="IPR005798">
    <property type="entry name" value="Cyt_b/b6_C"/>
</dbReference>
<dbReference type="InterPro" id="IPR036150">
    <property type="entry name" value="Cyt_b/b6_C_sf"/>
</dbReference>
<dbReference type="InterPro" id="IPR005797">
    <property type="entry name" value="Cyt_b/b6_N"/>
</dbReference>
<dbReference type="InterPro" id="IPR027387">
    <property type="entry name" value="Cytb/b6-like_sf"/>
</dbReference>
<dbReference type="InterPro" id="IPR030689">
    <property type="entry name" value="Cytochrome_b"/>
</dbReference>
<dbReference type="InterPro" id="IPR048260">
    <property type="entry name" value="Cytochrome_b_C_euk/bac"/>
</dbReference>
<dbReference type="InterPro" id="IPR048259">
    <property type="entry name" value="Cytochrome_b_N_euk/bac"/>
</dbReference>
<dbReference type="InterPro" id="IPR016174">
    <property type="entry name" value="Di-haem_cyt_TM"/>
</dbReference>
<dbReference type="PANTHER" id="PTHR19271">
    <property type="entry name" value="CYTOCHROME B"/>
    <property type="match status" value="1"/>
</dbReference>
<dbReference type="PANTHER" id="PTHR19271:SF16">
    <property type="entry name" value="CYTOCHROME B"/>
    <property type="match status" value="1"/>
</dbReference>
<dbReference type="Pfam" id="PF00032">
    <property type="entry name" value="Cytochrom_B_C"/>
    <property type="match status" value="1"/>
</dbReference>
<dbReference type="Pfam" id="PF00033">
    <property type="entry name" value="Cytochrome_B"/>
    <property type="match status" value="1"/>
</dbReference>
<dbReference type="PIRSF" id="PIRSF038885">
    <property type="entry name" value="COB"/>
    <property type="match status" value="1"/>
</dbReference>
<dbReference type="SUPFAM" id="SSF81648">
    <property type="entry name" value="a domain/subunit of cytochrome bc1 complex (Ubiquinol-cytochrome c reductase)"/>
    <property type="match status" value="1"/>
</dbReference>
<dbReference type="SUPFAM" id="SSF81342">
    <property type="entry name" value="Transmembrane di-heme cytochromes"/>
    <property type="match status" value="1"/>
</dbReference>
<dbReference type="PROSITE" id="PS51003">
    <property type="entry name" value="CYTB_CTER"/>
    <property type="match status" value="1"/>
</dbReference>
<dbReference type="PROSITE" id="PS51002">
    <property type="entry name" value="CYTB_NTER"/>
    <property type="match status" value="1"/>
</dbReference>
<gene>
    <name type="primary">MT-CYB</name>
    <name type="synonym">COB</name>
    <name type="synonym">CYTB</name>
    <name type="synonym">MTCYB</name>
</gene>
<name>CYB_CLERU</name>
<protein>
    <recommendedName>
        <fullName>Cytochrome b</fullName>
    </recommendedName>
    <alternativeName>
        <fullName>Complex III subunit 3</fullName>
    </alternativeName>
    <alternativeName>
        <fullName>Complex III subunit III</fullName>
    </alternativeName>
    <alternativeName>
        <fullName>Cytochrome b-c1 complex subunit 3</fullName>
    </alternativeName>
    <alternativeName>
        <fullName>Ubiquinol-cytochrome-c reductase complex cytochrome b subunit</fullName>
    </alternativeName>
</protein>
<comment type="function">
    <text evidence="2">Component of the ubiquinol-cytochrome c reductase complex (complex III or cytochrome b-c1 complex) that is part of the mitochondrial respiratory chain. The b-c1 complex mediates electron transfer from ubiquinol to cytochrome c. Contributes to the generation of a proton gradient across the mitochondrial membrane that is then used for ATP synthesis.</text>
</comment>
<comment type="cofactor">
    <cofactor evidence="2">
        <name>heme b</name>
        <dbReference type="ChEBI" id="CHEBI:60344"/>
    </cofactor>
    <text evidence="2">Binds 2 heme b groups non-covalently.</text>
</comment>
<comment type="subunit">
    <text evidence="2">The cytochrome bc1 complex contains 11 subunits: 3 respiratory subunits (MT-CYB, CYC1 and UQCRFS1), 2 core proteins (UQCRC1 and UQCRC2) and 6 low-molecular weight proteins (UQCRH/QCR6, UQCRB/QCR7, UQCRQ/QCR8, UQCR10/QCR9, UQCR11/QCR10 and a cleavage product of UQCRFS1). This cytochrome bc1 complex then forms a dimer.</text>
</comment>
<comment type="subcellular location">
    <subcellularLocation>
        <location evidence="2">Mitochondrion inner membrane</location>
        <topology evidence="2">Multi-pass membrane protein</topology>
    </subcellularLocation>
</comment>
<comment type="miscellaneous">
    <text evidence="1">Heme 1 (or BL or b562) is low-potential and absorbs at about 562 nm, and heme 2 (or BH or b566) is high-potential and absorbs at about 566 nm.</text>
</comment>
<comment type="similarity">
    <text evidence="3 4">Belongs to the cytochrome b family.</text>
</comment>
<comment type="caution">
    <text evidence="2">The full-length protein contains only eight transmembrane helices, not nine as predicted by bioinformatics tools.</text>
</comment>
<sequence>MTIIRKKHPLIKIINHAFIDLPAPSNISSWWNFGSLLGLCLIIQILTGLFLAMHYTSDTSTAFSSVTHICRDVNYGWLIRYMHANGASMFFICLFLHVGRGMYYGSYNMIETWNMGIILLFAVMATAFMGYVLPWGQMSFWGATVITNLLSAIPYIGTTLVEWIWGGFSVDKATLTRFFAFHFILPFIITALVFVHLLFLHETGSNNPTGLNSDADKIPFHPYYTIKDFLGVLILLTGLMILVLFFPDVLGDPDNYTPANPLNTPAHIKPEWYFLFAYAILRSIPNKLGGVLTLILSILILALLPLLHTSKQRGLTFRPITQTMYWILVADLLILTWIGGQPVEYPFIIIGQMASIAYFAIIVIFMPMAGMIENNILDLD</sequence>